<keyword id="KW-0963">Cytoplasm</keyword>
<keyword id="KW-0342">GTP-binding</keyword>
<keyword id="KW-0547">Nucleotide-binding</keyword>
<keyword id="KW-0648">Protein biosynthesis</keyword>
<keyword id="KW-1185">Reference proteome</keyword>
<comment type="function">
    <text evidence="1">Increases the formation of ribosomal termination complexes and stimulates activities of RF-1 and RF-2. It binds guanine nucleotides and has strong preference for UGA stop codons. It may interact directly with the ribosome. The stimulation of RF-1 and RF-2 is significantly reduced by GTP and GDP, but not by GMP.</text>
</comment>
<comment type="subcellular location">
    <subcellularLocation>
        <location evidence="1">Cytoplasm</location>
    </subcellularLocation>
</comment>
<comment type="similarity">
    <text evidence="1">Belongs to the TRAFAC class translation factor GTPase superfamily. Classic translation factor GTPase family. PrfC subfamily.</text>
</comment>
<proteinExistence type="inferred from homology"/>
<name>RF3_SACD2</name>
<protein>
    <recommendedName>
        <fullName evidence="1">Peptide chain release factor 3</fullName>
        <shortName evidence="1">RF-3</shortName>
    </recommendedName>
</protein>
<organism>
    <name type="scientific">Saccharophagus degradans (strain 2-40 / ATCC 43961 / DSM 17024)</name>
    <dbReference type="NCBI Taxonomy" id="203122"/>
    <lineage>
        <taxon>Bacteria</taxon>
        <taxon>Pseudomonadati</taxon>
        <taxon>Pseudomonadota</taxon>
        <taxon>Gammaproteobacteria</taxon>
        <taxon>Cellvibrionales</taxon>
        <taxon>Cellvibrionaceae</taxon>
        <taxon>Saccharophagus</taxon>
    </lineage>
</organism>
<gene>
    <name evidence="1" type="primary">prfC</name>
    <name type="ordered locus">Sde_2519</name>
</gene>
<sequence>MSAHSTAVGTAKRRTFAIISHPDAGKTTITEKLLLFGNAIQVGGSVKGKKGPHAKSDWMSMEQERGISVTSSVMQFPYKERTVNLLDTPGHEDFSEDTYRTLTAVDSVLMVIDGAKGVEDRTIKLMEVCRLRDTPILSFINKMDRDIRDPIDVMDEIETVLNIEAAPINWPIGMGKEFKGVYNLYTDIIHVFHHGQGSRIPDDTQIKGLNSPEADALLGAYAADIRDEIELVKGATHKFDLDAYLAGKLTPVFFGTALGNFGVREMLDGFVEWAPPPLDREANTRVVSAVEDKFSGFVFKIQANMDPKHRDRIAFMRVCSGTYTRGMKMRHVRLGKDVKISDAVTFLAGDRSQVEEAISGDIIGLHNHGTIQIGDTFTEGEDLKFTGIPHFAPELFRRIRLKDPLKVKQLQKGLQQLSEEGSTQVFFPLRNNDIIVGAVGVLQFEVVAYRLKDEYKVEAIYEPVSVATARWVDCEDDKKMAEFKRKCEDNLAIDGGGHLTYLAPTRVNLSLSQERYPDVLFRSTREH</sequence>
<dbReference type="EMBL" id="CP000282">
    <property type="protein sequence ID" value="ABD81779.1"/>
    <property type="molecule type" value="Genomic_DNA"/>
</dbReference>
<dbReference type="RefSeq" id="WP_011468996.1">
    <property type="nucleotide sequence ID" value="NC_007912.1"/>
</dbReference>
<dbReference type="SMR" id="Q21HQ0"/>
<dbReference type="STRING" id="203122.Sde_2519"/>
<dbReference type="GeneID" id="98614177"/>
<dbReference type="KEGG" id="sde:Sde_2519"/>
<dbReference type="eggNOG" id="COG4108">
    <property type="taxonomic scope" value="Bacteria"/>
</dbReference>
<dbReference type="HOGENOM" id="CLU_002794_2_1_6"/>
<dbReference type="OrthoDB" id="9801472at2"/>
<dbReference type="Proteomes" id="UP000001947">
    <property type="component" value="Chromosome"/>
</dbReference>
<dbReference type="GO" id="GO:0005829">
    <property type="term" value="C:cytosol"/>
    <property type="evidence" value="ECO:0007669"/>
    <property type="project" value="TreeGrafter"/>
</dbReference>
<dbReference type="GO" id="GO:0005525">
    <property type="term" value="F:GTP binding"/>
    <property type="evidence" value="ECO:0007669"/>
    <property type="project" value="UniProtKB-UniRule"/>
</dbReference>
<dbReference type="GO" id="GO:0003924">
    <property type="term" value="F:GTPase activity"/>
    <property type="evidence" value="ECO:0007669"/>
    <property type="project" value="InterPro"/>
</dbReference>
<dbReference type="GO" id="GO:0097216">
    <property type="term" value="F:guanosine tetraphosphate binding"/>
    <property type="evidence" value="ECO:0007669"/>
    <property type="project" value="UniProtKB-ARBA"/>
</dbReference>
<dbReference type="GO" id="GO:0016150">
    <property type="term" value="F:translation release factor activity, codon nonspecific"/>
    <property type="evidence" value="ECO:0007669"/>
    <property type="project" value="TreeGrafter"/>
</dbReference>
<dbReference type="GO" id="GO:0016149">
    <property type="term" value="F:translation release factor activity, codon specific"/>
    <property type="evidence" value="ECO:0007669"/>
    <property type="project" value="UniProtKB-UniRule"/>
</dbReference>
<dbReference type="GO" id="GO:0006449">
    <property type="term" value="P:regulation of translational termination"/>
    <property type="evidence" value="ECO:0007669"/>
    <property type="project" value="UniProtKB-UniRule"/>
</dbReference>
<dbReference type="CDD" id="cd04169">
    <property type="entry name" value="RF3"/>
    <property type="match status" value="1"/>
</dbReference>
<dbReference type="CDD" id="cd03689">
    <property type="entry name" value="RF3_II"/>
    <property type="match status" value="1"/>
</dbReference>
<dbReference type="CDD" id="cd16259">
    <property type="entry name" value="RF3_III"/>
    <property type="match status" value="1"/>
</dbReference>
<dbReference type="FunFam" id="2.40.30.10:FF:000040">
    <property type="entry name" value="Peptide chain release factor 3"/>
    <property type="match status" value="1"/>
</dbReference>
<dbReference type="FunFam" id="3.30.70.3280:FF:000001">
    <property type="entry name" value="Peptide chain release factor 3"/>
    <property type="match status" value="1"/>
</dbReference>
<dbReference type="FunFam" id="3.40.50.300:FF:000542">
    <property type="entry name" value="Peptide chain release factor 3"/>
    <property type="match status" value="1"/>
</dbReference>
<dbReference type="Gene3D" id="3.40.50.300">
    <property type="entry name" value="P-loop containing nucleotide triphosphate hydrolases"/>
    <property type="match status" value="2"/>
</dbReference>
<dbReference type="Gene3D" id="3.30.70.3280">
    <property type="entry name" value="Peptide chain release factor 3, domain III"/>
    <property type="match status" value="1"/>
</dbReference>
<dbReference type="HAMAP" id="MF_00072">
    <property type="entry name" value="Rel_fac_3"/>
    <property type="match status" value="1"/>
</dbReference>
<dbReference type="InterPro" id="IPR053905">
    <property type="entry name" value="EF-G-like_DII"/>
</dbReference>
<dbReference type="InterPro" id="IPR035647">
    <property type="entry name" value="EFG_III/V"/>
</dbReference>
<dbReference type="InterPro" id="IPR031157">
    <property type="entry name" value="G_TR_CS"/>
</dbReference>
<dbReference type="InterPro" id="IPR027417">
    <property type="entry name" value="P-loop_NTPase"/>
</dbReference>
<dbReference type="InterPro" id="IPR004548">
    <property type="entry name" value="PrfC"/>
</dbReference>
<dbReference type="InterPro" id="IPR032090">
    <property type="entry name" value="RF3_C"/>
</dbReference>
<dbReference type="InterPro" id="IPR038467">
    <property type="entry name" value="RF3_dom_3_sf"/>
</dbReference>
<dbReference type="InterPro" id="IPR041732">
    <property type="entry name" value="RF3_GTP-bd"/>
</dbReference>
<dbReference type="InterPro" id="IPR005225">
    <property type="entry name" value="Small_GTP-bd"/>
</dbReference>
<dbReference type="InterPro" id="IPR000795">
    <property type="entry name" value="T_Tr_GTP-bd_dom"/>
</dbReference>
<dbReference type="InterPro" id="IPR009000">
    <property type="entry name" value="Transl_B-barrel_sf"/>
</dbReference>
<dbReference type="NCBIfam" id="TIGR00503">
    <property type="entry name" value="prfC"/>
    <property type="match status" value="1"/>
</dbReference>
<dbReference type="NCBIfam" id="NF001964">
    <property type="entry name" value="PRK00741.1"/>
    <property type="match status" value="1"/>
</dbReference>
<dbReference type="NCBIfam" id="TIGR00231">
    <property type="entry name" value="small_GTP"/>
    <property type="match status" value="1"/>
</dbReference>
<dbReference type="PANTHER" id="PTHR43556">
    <property type="entry name" value="PEPTIDE CHAIN RELEASE FACTOR RF3"/>
    <property type="match status" value="1"/>
</dbReference>
<dbReference type="PANTHER" id="PTHR43556:SF2">
    <property type="entry name" value="PEPTIDE CHAIN RELEASE FACTOR RF3"/>
    <property type="match status" value="1"/>
</dbReference>
<dbReference type="Pfam" id="PF22042">
    <property type="entry name" value="EF-G_D2"/>
    <property type="match status" value="1"/>
</dbReference>
<dbReference type="Pfam" id="PF00009">
    <property type="entry name" value="GTP_EFTU"/>
    <property type="match status" value="1"/>
</dbReference>
<dbReference type="Pfam" id="PF16658">
    <property type="entry name" value="RF3_C"/>
    <property type="match status" value="1"/>
</dbReference>
<dbReference type="PRINTS" id="PR00315">
    <property type="entry name" value="ELONGATNFCT"/>
</dbReference>
<dbReference type="SUPFAM" id="SSF54980">
    <property type="entry name" value="EF-G C-terminal domain-like"/>
    <property type="match status" value="1"/>
</dbReference>
<dbReference type="SUPFAM" id="SSF52540">
    <property type="entry name" value="P-loop containing nucleoside triphosphate hydrolases"/>
    <property type="match status" value="1"/>
</dbReference>
<dbReference type="SUPFAM" id="SSF50447">
    <property type="entry name" value="Translation proteins"/>
    <property type="match status" value="1"/>
</dbReference>
<dbReference type="PROSITE" id="PS00301">
    <property type="entry name" value="G_TR_1"/>
    <property type="match status" value="1"/>
</dbReference>
<dbReference type="PROSITE" id="PS51722">
    <property type="entry name" value="G_TR_2"/>
    <property type="match status" value="1"/>
</dbReference>
<evidence type="ECO:0000255" key="1">
    <source>
        <dbReference type="HAMAP-Rule" id="MF_00072"/>
    </source>
</evidence>
<reference key="1">
    <citation type="journal article" date="2008" name="PLoS Genet.">
        <title>Complete genome sequence of the complex carbohydrate-degrading marine bacterium, Saccharophagus degradans strain 2-40 T.</title>
        <authorList>
            <person name="Weiner R.M."/>
            <person name="Taylor L.E. II"/>
            <person name="Henrissat B."/>
            <person name="Hauser L."/>
            <person name="Land M."/>
            <person name="Coutinho P.M."/>
            <person name="Rancurel C."/>
            <person name="Saunders E.H."/>
            <person name="Longmire A.G."/>
            <person name="Zhang H."/>
            <person name="Bayer E.A."/>
            <person name="Gilbert H.J."/>
            <person name="Larimer F."/>
            <person name="Zhulin I.B."/>
            <person name="Ekborg N.A."/>
            <person name="Lamed R."/>
            <person name="Richardson P.M."/>
            <person name="Borovok I."/>
            <person name="Hutcheson S."/>
        </authorList>
    </citation>
    <scope>NUCLEOTIDE SEQUENCE [LARGE SCALE GENOMIC DNA]</scope>
    <source>
        <strain>2-40 / ATCC 43961 / DSM 17024</strain>
    </source>
</reference>
<feature type="chain" id="PRO_0000242203" description="Peptide chain release factor 3">
    <location>
        <begin position="1"/>
        <end position="527"/>
    </location>
</feature>
<feature type="domain" description="tr-type G">
    <location>
        <begin position="11"/>
        <end position="278"/>
    </location>
</feature>
<feature type="binding site" evidence="1">
    <location>
        <begin position="20"/>
        <end position="27"/>
    </location>
    <ligand>
        <name>GTP</name>
        <dbReference type="ChEBI" id="CHEBI:37565"/>
    </ligand>
</feature>
<feature type="binding site" evidence="1">
    <location>
        <begin position="87"/>
        <end position="91"/>
    </location>
    <ligand>
        <name>GTP</name>
        <dbReference type="ChEBI" id="CHEBI:37565"/>
    </ligand>
</feature>
<feature type="binding site" evidence="1">
    <location>
        <begin position="141"/>
        <end position="144"/>
    </location>
    <ligand>
        <name>GTP</name>
        <dbReference type="ChEBI" id="CHEBI:37565"/>
    </ligand>
</feature>
<accession>Q21HQ0</accession>